<comment type="function">
    <text evidence="1">Specific subunit of the TRAPP II complex, a highly conserved vesicle tethering complex that is required for the proper transport of proteins in post-Golgi trafficking pathways to the growing cell plate in mitotic active cells.</text>
</comment>
<comment type="subunit">
    <text evidence="1">Part of the multisubunit TRAPP (transport protein particle) II complex composed of BET3, BET5, TRS20, TRS23, TRS31, TRS33, TRS65, TRS85, TRS120 and TRS130.</text>
</comment>
<comment type="subcellular location">
    <subcellularLocation>
        <location evidence="1">Golgi apparatus</location>
        <location evidence="1">trans-Golgi network</location>
    </subcellularLocation>
    <subcellularLocation>
        <location evidence="1">Early endosome</location>
    </subcellularLocation>
</comment>
<comment type="similarity">
    <text evidence="3">Belongs to the TRS120 family.</text>
</comment>
<comment type="sequence caution" evidence="3">
    <conflict type="erroneous gene model prediction">
        <sequence resource="EMBL-CDS" id="CAE01639"/>
    </conflict>
</comment>
<evidence type="ECO:0000250" key="1">
    <source>
        <dbReference type="UniProtKB" id="Q9FY61"/>
    </source>
</evidence>
<evidence type="ECO:0000256" key="2">
    <source>
        <dbReference type="SAM" id="MobiDB-lite"/>
    </source>
</evidence>
<evidence type="ECO:0000305" key="3"/>
<evidence type="ECO:0000312" key="4">
    <source>
        <dbReference type="EMBL" id="BAF15148.1"/>
    </source>
</evidence>
<evidence type="ECO:0000312" key="5">
    <source>
        <dbReference type="EMBL" id="CAE01639.1"/>
    </source>
</evidence>
<keyword id="KW-0967">Endosome</keyword>
<keyword id="KW-0333">Golgi apparatus</keyword>
<keyword id="KW-1185">Reference proteome</keyword>
<keyword id="KW-0813">Transport</keyword>
<sequence length="1187" mass="129373">MEPGVSIESGSAIRVAVLPVGGPISPARLRDYAALVARHARVDLASLRPYYSEHQKSPFAHQPWGGGCLRLKFVLGGCVPSPWEDFQSSRKVLAVVGICHLPSSPDLGRVAADFVDAARSYPSALASRCFAFCPTDAQLVQKKRDNIIMFPPSDQQSLELHMLTMIQDLSASLLMEFEKWVLRAESTGTILKTPLDSQSSLGSEEVIKAKKRRLGRAQKIIGDYCLLAGSPADANAHYATAIELARLTGDVFWHAGALEGSVCALVVDRMAESDPVLEDEVKFRYYTIIQLYRRATLQDNAQRVSPVSFELEAALKLARYLCRRQCAKEVSDLLMGAADGAKALIDASDRLILYIEIARLFGTLGYKRKAAFFSRQVAQLYLQQDNAYAAMSAMQVLTTTTTAYHVQSRKTSKMDHGLLKSVVSLFESQWSTLQMVVLREILMSSIRAADPLSSWSAAARLLRSFYPLITPAGQSGLASSLSNSADKLPSGTRCADPCLPFIRLHSFPLHPSQREIVKRNPNKKEWWTGGGPSGPFIYTPFTKGGTSGTSKQEVNWIVGEPVQVMVELANPCSFDLIVESIYLSVHSGNFDAFPVSVNLPPNTSKLVLLSGIPTQVGQVSIPGCIVHCFGVITEHLFKEVDCLLLGAAQGLVLSDPFRCCGSSKFKSVNFPSISVVPPLPLLVANVVGGDGSILLYEGEIRDVLITLTNAGTVPVEEANVALSGKNQDSVISIAHSTWKSALPIKPGGEVTFAVTLRAWHLSPTDLEADGSRSPANSRRIAREGSNPFLDIHYAGPSGNSESNDVSLPPGRRLVVPLNICVVQGMRLVRARLLSMELPARFTDAHLRSVSSKDNLSNGSDAIRNDISLLKIDPYKGSWDLRLLELELFNPTDVVFDVDVSVHLDGTSVEQKILPEDKTASSACHKTRIDRDYSARVLIPLEHFKLPVLDTSFFVKENGSDEPLGSRAATLAEKNAKAELNASINNLISKIKVKWHSGRNSSGELNIKDAIQTALQASIMDILLPDPLTFSFRHAKDGTTAKTDSSKEPGDGSSRSADESVLRCKDPIFANEMTHMEVQIRNNTKETIRMNLSISCKDVAGENCFDENSATVLWAGVLSDIYLEVQPLQEVVHPFSIYFLVPGDYSLQAASVIIDATDVLRARAKAESPDEPILCRGSPFHIHVVGTA</sequence>
<proteinExistence type="evidence at transcript level"/>
<name>TR120_ORYSJ</name>
<feature type="chain" id="PRO_0000431449" description="Trafficking protein particle complex II-specific subunit 120 homolog">
    <location>
        <begin position="1"/>
        <end position="1187"/>
    </location>
</feature>
<feature type="region of interest" description="Disordered" evidence="2">
    <location>
        <begin position="1037"/>
        <end position="1059"/>
    </location>
</feature>
<protein>
    <recommendedName>
        <fullName evidence="3">Trafficking protein particle complex II-specific subunit 120 homolog</fullName>
        <shortName evidence="3">TRAPP II-specific subunit 120 homolog</shortName>
    </recommendedName>
</protein>
<dbReference type="EMBL" id="AL606594">
    <property type="protein sequence ID" value="CAE01639.1"/>
    <property type="status" value="ALT_SEQ"/>
    <property type="molecule type" value="Genomic_DNA"/>
</dbReference>
<dbReference type="EMBL" id="AP008210">
    <property type="protein sequence ID" value="BAF15148.1"/>
    <property type="molecule type" value="Genomic_DNA"/>
</dbReference>
<dbReference type="EMBL" id="AP014960">
    <property type="protein sequence ID" value="BAS89945.1"/>
    <property type="molecule type" value="Genomic_DNA"/>
</dbReference>
<dbReference type="EMBL" id="AK066572">
    <property type="status" value="NOT_ANNOTATED_CDS"/>
    <property type="molecule type" value="mRNA"/>
</dbReference>
<dbReference type="RefSeq" id="XP_015636209.1">
    <property type="nucleotide sequence ID" value="XM_015780723.1"/>
</dbReference>
<dbReference type="SMR" id="Q0JBY9"/>
<dbReference type="FunCoup" id="Q0JBY9">
    <property type="interactions" value="2863"/>
</dbReference>
<dbReference type="STRING" id="39947.Q0JBY9"/>
<dbReference type="PaxDb" id="39947-Q0JBY9"/>
<dbReference type="EnsemblPlants" id="Os04t0502200-01">
    <property type="protein sequence ID" value="Os04t0502200-01"/>
    <property type="gene ID" value="Os04g0502200"/>
</dbReference>
<dbReference type="Gramene" id="Os04t0502200-01">
    <property type="protein sequence ID" value="Os04t0502200-01"/>
    <property type="gene ID" value="Os04g0502200"/>
</dbReference>
<dbReference type="KEGG" id="dosa:Os04g0502200"/>
<dbReference type="eggNOG" id="KOG1953">
    <property type="taxonomic scope" value="Eukaryota"/>
</dbReference>
<dbReference type="HOGENOM" id="CLU_001678_0_0_1"/>
<dbReference type="InParanoid" id="Q0JBY9"/>
<dbReference type="OMA" id="PFANQPW"/>
<dbReference type="OrthoDB" id="27962at2759"/>
<dbReference type="Proteomes" id="UP000000763">
    <property type="component" value="Chromosome 4"/>
</dbReference>
<dbReference type="Proteomes" id="UP000059680">
    <property type="component" value="Chromosome 4"/>
</dbReference>
<dbReference type="GO" id="GO:0005769">
    <property type="term" value="C:early endosome"/>
    <property type="evidence" value="ECO:0007669"/>
    <property type="project" value="UniProtKB-SubCell"/>
</dbReference>
<dbReference type="GO" id="GO:0005802">
    <property type="term" value="C:trans-Golgi network"/>
    <property type="evidence" value="ECO:0000318"/>
    <property type="project" value="GO_Central"/>
</dbReference>
<dbReference type="GO" id="GO:0000919">
    <property type="term" value="P:cell plate assembly"/>
    <property type="evidence" value="ECO:0007669"/>
    <property type="project" value="EnsemblPlants"/>
</dbReference>
<dbReference type="InterPro" id="IPR013935">
    <property type="entry name" value="TRAPP_II_complex_Trs120"/>
</dbReference>
<dbReference type="PANTHER" id="PTHR21512">
    <property type="entry name" value="TRAFFICKING PROTEIN PARTICLE COMPLEX SUBUNIT 9"/>
    <property type="match status" value="1"/>
</dbReference>
<dbReference type="PANTHER" id="PTHR21512:SF5">
    <property type="entry name" value="TRAFFICKING PROTEIN PARTICLE COMPLEX SUBUNIT 9"/>
    <property type="match status" value="1"/>
</dbReference>
<dbReference type="Pfam" id="PF08626">
    <property type="entry name" value="TRAPPC9-Trs120"/>
    <property type="match status" value="3"/>
</dbReference>
<reference key="1">
    <citation type="journal article" date="2002" name="Nature">
        <title>Sequence and analysis of rice chromosome 4.</title>
        <authorList>
            <person name="Feng Q."/>
            <person name="Zhang Y."/>
            <person name="Hao P."/>
            <person name="Wang S."/>
            <person name="Fu G."/>
            <person name="Huang Y."/>
            <person name="Li Y."/>
            <person name="Zhu J."/>
            <person name="Liu Y."/>
            <person name="Hu X."/>
            <person name="Jia P."/>
            <person name="Zhang Y."/>
            <person name="Zhao Q."/>
            <person name="Ying K."/>
            <person name="Yu S."/>
            <person name="Tang Y."/>
            <person name="Weng Q."/>
            <person name="Zhang L."/>
            <person name="Lu Y."/>
            <person name="Mu J."/>
            <person name="Lu Y."/>
            <person name="Zhang L.S."/>
            <person name="Yu Z."/>
            <person name="Fan D."/>
            <person name="Liu X."/>
            <person name="Lu T."/>
            <person name="Li C."/>
            <person name="Wu Y."/>
            <person name="Sun T."/>
            <person name="Lei H."/>
            <person name="Li T."/>
            <person name="Hu H."/>
            <person name="Guan J."/>
            <person name="Wu M."/>
            <person name="Zhang R."/>
            <person name="Zhou B."/>
            <person name="Chen Z."/>
            <person name="Chen L."/>
            <person name="Jin Z."/>
            <person name="Wang R."/>
            <person name="Yin H."/>
            <person name="Cai Z."/>
            <person name="Ren S."/>
            <person name="Lv G."/>
            <person name="Gu W."/>
            <person name="Zhu G."/>
            <person name="Tu Y."/>
            <person name="Jia J."/>
            <person name="Zhang Y."/>
            <person name="Chen J."/>
            <person name="Kang H."/>
            <person name="Chen X."/>
            <person name="Shao C."/>
            <person name="Sun Y."/>
            <person name="Hu Q."/>
            <person name="Zhang X."/>
            <person name="Zhang W."/>
            <person name="Wang L."/>
            <person name="Ding C."/>
            <person name="Sheng H."/>
            <person name="Gu J."/>
            <person name="Chen S."/>
            <person name="Ni L."/>
            <person name="Zhu F."/>
            <person name="Chen W."/>
            <person name="Lan L."/>
            <person name="Lai Y."/>
            <person name="Cheng Z."/>
            <person name="Gu M."/>
            <person name="Jiang J."/>
            <person name="Li J."/>
            <person name="Hong G."/>
            <person name="Xue Y."/>
            <person name="Han B."/>
        </authorList>
    </citation>
    <scope>NUCLEOTIDE SEQUENCE [LARGE SCALE GENOMIC DNA]</scope>
    <source>
        <strain>cv. Nipponbare</strain>
    </source>
</reference>
<reference key="2">
    <citation type="journal article" date="2005" name="Nature">
        <title>The map-based sequence of the rice genome.</title>
        <authorList>
            <consortium name="International rice genome sequencing project (IRGSP)"/>
        </authorList>
    </citation>
    <scope>NUCLEOTIDE SEQUENCE [LARGE SCALE GENOMIC DNA]</scope>
    <source>
        <strain>cv. Nipponbare</strain>
    </source>
</reference>
<reference key="3">
    <citation type="journal article" date="2008" name="Nucleic Acids Res.">
        <title>The rice annotation project database (RAP-DB): 2008 update.</title>
        <authorList>
            <consortium name="The rice annotation project (RAP)"/>
        </authorList>
    </citation>
    <scope>GENOME REANNOTATION</scope>
    <source>
        <strain>cv. Nipponbare</strain>
    </source>
</reference>
<reference key="4">
    <citation type="journal article" date="2013" name="Rice">
        <title>Improvement of the Oryza sativa Nipponbare reference genome using next generation sequence and optical map data.</title>
        <authorList>
            <person name="Kawahara Y."/>
            <person name="de la Bastide M."/>
            <person name="Hamilton J.P."/>
            <person name="Kanamori H."/>
            <person name="McCombie W.R."/>
            <person name="Ouyang S."/>
            <person name="Schwartz D.C."/>
            <person name="Tanaka T."/>
            <person name="Wu J."/>
            <person name="Zhou S."/>
            <person name="Childs K.L."/>
            <person name="Davidson R.M."/>
            <person name="Lin H."/>
            <person name="Quesada-Ocampo L."/>
            <person name="Vaillancourt B."/>
            <person name="Sakai H."/>
            <person name="Lee S.S."/>
            <person name="Kim J."/>
            <person name="Numa H."/>
            <person name="Itoh T."/>
            <person name="Buell C.R."/>
            <person name="Matsumoto T."/>
        </authorList>
    </citation>
    <scope>GENOME REANNOTATION</scope>
    <source>
        <strain>cv. Nipponbare</strain>
    </source>
</reference>
<reference key="5">
    <citation type="journal article" date="2003" name="Science">
        <title>Collection, mapping, and annotation of over 28,000 cDNA clones from japonica rice.</title>
        <authorList>
            <consortium name="The rice full-length cDNA consortium"/>
        </authorList>
    </citation>
    <scope>NUCLEOTIDE SEQUENCE [LARGE SCALE MRNA]</scope>
    <source>
        <strain>cv. Nipponbare</strain>
    </source>
</reference>
<gene>
    <name evidence="3" type="primary">TRS120</name>
    <name evidence="4" type="ordered locus">Os04g0502200</name>
    <name evidence="3" type="ordered locus">LOC_Os04g42370</name>
    <name evidence="5" type="ORF">OSJNBa0029H02.30</name>
</gene>
<organism>
    <name type="scientific">Oryza sativa subsp. japonica</name>
    <name type="common">Rice</name>
    <dbReference type="NCBI Taxonomy" id="39947"/>
    <lineage>
        <taxon>Eukaryota</taxon>
        <taxon>Viridiplantae</taxon>
        <taxon>Streptophyta</taxon>
        <taxon>Embryophyta</taxon>
        <taxon>Tracheophyta</taxon>
        <taxon>Spermatophyta</taxon>
        <taxon>Magnoliopsida</taxon>
        <taxon>Liliopsida</taxon>
        <taxon>Poales</taxon>
        <taxon>Poaceae</taxon>
        <taxon>BOP clade</taxon>
        <taxon>Oryzoideae</taxon>
        <taxon>Oryzeae</taxon>
        <taxon>Oryzinae</taxon>
        <taxon>Oryza</taxon>
        <taxon>Oryza sativa</taxon>
    </lineage>
</organism>
<accession>Q0JBY9</accession>
<accession>A0A0N7KJB4</accession>
<accession>Q4JF22</accession>